<reference key="1">
    <citation type="journal article" date="1998" name="Microbiology">
        <title>The yvsA-yvqA (293 degrees - 289 degrees) region of the Bacillus subtilis chromosome containing genes involved in metal ion uptake and a putative sigma factor.</title>
        <authorList>
            <person name="Wipat A."/>
            <person name="Brignell C.S."/>
            <person name="Guy J.B."/>
            <person name="Rose M."/>
            <person name="Emmerson P.T."/>
            <person name="Harwood C.R."/>
        </authorList>
    </citation>
    <scope>NUCLEOTIDE SEQUENCE [GENOMIC DNA]</scope>
    <source>
        <strain>168</strain>
    </source>
</reference>
<reference key="2">
    <citation type="journal article" date="1997" name="Nature">
        <title>The complete genome sequence of the Gram-positive bacterium Bacillus subtilis.</title>
        <authorList>
            <person name="Kunst F."/>
            <person name="Ogasawara N."/>
            <person name="Moszer I."/>
            <person name="Albertini A.M."/>
            <person name="Alloni G."/>
            <person name="Azevedo V."/>
            <person name="Bertero M.G."/>
            <person name="Bessieres P."/>
            <person name="Bolotin A."/>
            <person name="Borchert S."/>
            <person name="Borriss R."/>
            <person name="Boursier L."/>
            <person name="Brans A."/>
            <person name="Braun M."/>
            <person name="Brignell S.C."/>
            <person name="Bron S."/>
            <person name="Brouillet S."/>
            <person name="Bruschi C.V."/>
            <person name="Caldwell B."/>
            <person name="Capuano V."/>
            <person name="Carter N.M."/>
            <person name="Choi S.-K."/>
            <person name="Codani J.-J."/>
            <person name="Connerton I.F."/>
            <person name="Cummings N.J."/>
            <person name="Daniel R.A."/>
            <person name="Denizot F."/>
            <person name="Devine K.M."/>
            <person name="Duesterhoeft A."/>
            <person name="Ehrlich S.D."/>
            <person name="Emmerson P.T."/>
            <person name="Entian K.-D."/>
            <person name="Errington J."/>
            <person name="Fabret C."/>
            <person name="Ferrari E."/>
            <person name="Foulger D."/>
            <person name="Fritz C."/>
            <person name="Fujita M."/>
            <person name="Fujita Y."/>
            <person name="Fuma S."/>
            <person name="Galizzi A."/>
            <person name="Galleron N."/>
            <person name="Ghim S.-Y."/>
            <person name="Glaser P."/>
            <person name="Goffeau A."/>
            <person name="Golightly E.J."/>
            <person name="Grandi G."/>
            <person name="Guiseppi G."/>
            <person name="Guy B.J."/>
            <person name="Haga K."/>
            <person name="Haiech J."/>
            <person name="Harwood C.R."/>
            <person name="Henaut A."/>
            <person name="Hilbert H."/>
            <person name="Holsappel S."/>
            <person name="Hosono S."/>
            <person name="Hullo M.-F."/>
            <person name="Itaya M."/>
            <person name="Jones L.-M."/>
            <person name="Joris B."/>
            <person name="Karamata D."/>
            <person name="Kasahara Y."/>
            <person name="Klaerr-Blanchard M."/>
            <person name="Klein C."/>
            <person name="Kobayashi Y."/>
            <person name="Koetter P."/>
            <person name="Koningstein G."/>
            <person name="Krogh S."/>
            <person name="Kumano M."/>
            <person name="Kurita K."/>
            <person name="Lapidus A."/>
            <person name="Lardinois S."/>
            <person name="Lauber J."/>
            <person name="Lazarevic V."/>
            <person name="Lee S.-M."/>
            <person name="Levine A."/>
            <person name="Liu H."/>
            <person name="Masuda S."/>
            <person name="Mauel C."/>
            <person name="Medigue C."/>
            <person name="Medina N."/>
            <person name="Mellado R.P."/>
            <person name="Mizuno M."/>
            <person name="Moestl D."/>
            <person name="Nakai S."/>
            <person name="Noback M."/>
            <person name="Noone D."/>
            <person name="O'Reilly M."/>
            <person name="Ogawa K."/>
            <person name="Ogiwara A."/>
            <person name="Oudega B."/>
            <person name="Park S.-H."/>
            <person name="Parro V."/>
            <person name="Pohl T.M."/>
            <person name="Portetelle D."/>
            <person name="Porwollik S."/>
            <person name="Prescott A.M."/>
            <person name="Presecan E."/>
            <person name="Pujic P."/>
            <person name="Purnelle B."/>
            <person name="Rapoport G."/>
            <person name="Rey M."/>
            <person name="Reynolds S."/>
            <person name="Rieger M."/>
            <person name="Rivolta C."/>
            <person name="Rocha E."/>
            <person name="Roche B."/>
            <person name="Rose M."/>
            <person name="Sadaie Y."/>
            <person name="Sato T."/>
            <person name="Scanlan E."/>
            <person name="Schleich S."/>
            <person name="Schroeter R."/>
            <person name="Scoffone F."/>
            <person name="Sekiguchi J."/>
            <person name="Sekowska A."/>
            <person name="Seror S.J."/>
            <person name="Serror P."/>
            <person name="Shin B.-S."/>
            <person name="Soldo B."/>
            <person name="Sorokin A."/>
            <person name="Tacconi E."/>
            <person name="Takagi T."/>
            <person name="Takahashi H."/>
            <person name="Takemaru K."/>
            <person name="Takeuchi M."/>
            <person name="Tamakoshi A."/>
            <person name="Tanaka T."/>
            <person name="Terpstra P."/>
            <person name="Tognoni A."/>
            <person name="Tosato V."/>
            <person name="Uchiyama S."/>
            <person name="Vandenbol M."/>
            <person name="Vannier F."/>
            <person name="Vassarotti A."/>
            <person name="Viari A."/>
            <person name="Wambutt R."/>
            <person name="Wedler E."/>
            <person name="Wedler H."/>
            <person name="Weitzenegger T."/>
            <person name="Winters P."/>
            <person name="Wipat A."/>
            <person name="Yamamoto H."/>
            <person name="Yamane K."/>
            <person name="Yasumoto K."/>
            <person name="Yata K."/>
            <person name="Yoshida K."/>
            <person name="Yoshikawa H.-F."/>
            <person name="Zumstein E."/>
            <person name="Yoshikawa H."/>
            <person name="Danchin A."/>
        </authorList>
    </citation>
    <scope>NUCLEOTIDE SEQUENCE [LARGE SCALE GENOMIC DNA]</scope>
    <source>
        <strain>168</strain>
    </source>
</reference>
<reference key="3">
    <citation type="journal article" date="2001" name="J. Bacteriol.">
        <title>Comprehensive DNA microarray analysis of Bacillus subtilis two-component regulatory systems.</title>
        <authorList>
            <person name="Kobayashi K."/>
            <person name="Ogura M."/>
            <person name="Yamaguchi H."/>
            <person name="Yoshida K."/>
            <person name="Ogasawara N."/>
            <person name="Tanaka T."/>
            <person name="Fujita Y."/>
        </authorList>
    </citation>
    <scope>FUNCTION</scope>
</reference>
<reference key="4">
    <citation type="journal article" date="2003" name="Mol. Microbiol.">
        <title>Cell wall stress responses in Bacillus subtilis: the regulatory network of the bacitracin stimulon.</title>
        <authorList>
            <person name="Mascher T."/>
            <person name="Margulis N.G."/>
            <person name="Wang T."/>
            <person name="Ye R.W."/>
            <person name="Helmann J.D."/>
        </authorList>
    </citation>
    <scope>INDUCTION BY BACITRACIN</scope>
    <source>
        <strain>168 / CU1065</strain>
    </source>
</reference>
<reference key="5">
    <citation type="journal article" date="2004" name="Antimicrob. Agents Chemother.">
        <title>Antibiotic-inducible promoter regulated by the cell envelope stress-sensing two-component system LiaRS of Bacillus subtilis.</title>
        <authorList>
            <person name="Mascher T."/>
            <person name="Zimmer S.L."/>
            <person name="Smith T.-A."/>
            <person name="Helmann J.D."/>
        </authorList>
    </citation>
    <scope>FUNCTION</scope>
    <scope>INDUCTION BY ANTIBIOTICS</scope>
</reference>
<reference key="6">
    <citation type="journal article" date="2005" name="Appl. Microbiol. Biotechnol.">
        <title>Transcriptome analysis of the secretion stress response of Bacillus subtilis.</title>
        <authorList>
            <person name="Hyyrylaeinen H.-L."/>
            <person name="Sarvas M."/>
            <person name="Kontinen V.P."/>
        </authorList>
    </citation>
    <scope>INDUCTION BY STRESS</scope>
</reference>
<reference key="7">
    <citation type="journal article" date="2005" name="Microbiology">
        <title>Cationic antimicrobial peptides elicit a complex stress response in Bacillus subtilis that involves ECF-type sigma factors and two-component signal transduction systems.</title>
        <authorList>
            <person name="Pietiaeinen M."/>
            <person name="Gardemeister M."/>
            <person name="Mecklin M."/>
            <person name="Leskelae S."/>
            <person name="Sarvas M."/>
            <person name="Kontinen V.P."/>
        </authorList>
    </citation>
    <scope>INDUCTION BY LL-37; PG-1 AND TRITON X-100</scope>
    <source>
        <strain>168</strain>
    </source>
</reference>
<protein>
    <recommendedName>
        <fullName>Transcriptional regulatory protein LiaR</fullName>
    </recommendedName>
</protein>
<name>LIAR_BACSU</name>
<comment type="function">
    <text evidence="3 5">Member of the two-component regulatory system LiaS/LiaR probably involved in response to a subset of cell wall-active antibiotics that interfere with the lipid II cycle in the cytoplasmic membrane (bacitracin, nisin, ramoplanin and vancomycin). Also seems to be involved in response to cationic antimicrobial peptides and secretion stress. LiaR regulates the transcription of the liaIHGFSR operon.</text>
</comment>
<comment type="subcellular location">
    <subcellularLocation>
        <location evidence="8">Cytoplasm</location>
    </subcellularLocation>
</comment>
<comment type="induction">
    <text evidence="4 5 6 7">Autoregulated. Induced by antibiotics (vancomycin, bacitracin, nisin and ramoplanin), cationic antimicrobial peptides (human LL-37 and porcine PG-1), Triton X-100 and severe secretion stress.</text>
</comment>
<comment type="PTM">
    <text evidence="8">Phosphorylated by LiaS.</text>
</comment>
<organism>
    <name type="scientific">Bacillus subtilis (strain 168)</name>
    <dbReference type="NCBI Taxonomy" id="224308"/>
    <lineage>
        <taxon>Bacteria</taxon>
        <taxon>Bacillati</taxon>
        <taxon>Bacillota</taxon>
        <taxon>Bacilli</taxon>
        <taxon>Bacillales</taxon>
        <taxon>Bacillaceae</taxon>
        <taxon>Bacillus</taxon>
    </lineage>
</organism>
<dbReference type="EMBL" id="AJ223978">
    <property type="protein sequence ID" value="CAA11745.1"/>
    <property type="molecule type" value="Genomic_DNA"/>
</dbReference>
<dbReference type="EMBL" id="AL009126">
    <property type="protein sequence ID" value="CAB15298.1"/>
    <property type="molecule type" value="Genomic_DNA"/>
</dbReference>
<dbReference type="PIR" id="E70045">
    <property type="entry name" value="E70045"/>
</dbReference>
<dbReference type="RefSeq" id="NP_391188.1">
    <property type="nucleotide sequence ID" value="NC_000964.3"/>
</dbReference>
<dbReference type="RefSeq" id="WP_003243201.1">
    <property type="nucleotide sequence ID" value="NZ_OZ025638.1"/>
</dbReference>
<dbReference type="SMR" id="O32197"/>
<dbReference type="FunCoup" id="O32197">
    <property type="interactions" value="328"/>
</dbReference>
<dbReference type="STRING" id="224308.BSU33080"/>
<dbReference type="PaxDb" id="224308-BSU33080"/>
<dbReference type="EnsemblBacteria" id="CAB15298">
    <property type="protein sequence ID" value="CAB15298"/>
    <property type="gene ID" value="BSU_33080"/>
</dbReference>
<dbReference type="GeneID" id="935957"/>
<dbReference type="KEGG" id="bsu:BSU33080"/>
<dbReference type="PATRIC" id="fig|224308.179.peg.3586"/>
<dbReference type="eggNOG" id="COG2197">
    <property type="taxonomic scope" value="Bacteria"/>
</dbReference>
<dbReference type="InParanoid" id="O32197"/>
<dbReference type="OrthoDB" id="9780153at2"/>
<dbReference type="PhylomeDB" id="O32197"/>
<dbReference type="BioCyc" id="BSUB:BSU33080-MONOMER"/>
<dbReference type="Proteomes" id="UP000001570">
    <property type="component" value="Chromosome"/>
</dbReference>
<dbReference type="GO" id="GO:0005737">
    <property type="term" value="C:cytoplasm"/>
    <property type="evidence" value="ECO:0007669"/>
    <property type="project" value="UniProtKB-SubCell"/>
</dbReference>
<dbReference type="GO" id="GO:0003677">
    <property type="term" value="F:DNA binding"/>
    <property type="evidence" value="ECO:0007669"/>
    <property type="project" value="UniProtKB-KW"/>
</dbReference>
<dbReference type="GO" id="GO:0000160">
    <property type="term" value="P:phosphorelay signal transduction system"/>
    <property type="evidence" value="ECO:0007669"/>
    <property type="project" value="UniProtKB-KW"/>
</dbReference>
<dbReference type="GO" id="GO:0006355">
    <property type="term" value="P:regulation of DNA-templated transcription"/>
    <property type="evidence" value="ECO:0007669"/>
    <property type="project" value="InterPro"/>
</dbReference>
<dbReference type="CDD" id="cd06170">
    <property type="entry name" value="LuxR_C_like"/>
    <property type="match status" value="1"/>
</dbReference>
<dbReference type="CDD" id="cd17535">
    <property type="entry name" value="REC_NarL-like"/>
    <property type="match status" value="1"/>
</dbReference>
<dbReference type="Gene3D" id="3.40.50.2300">
    <property type="match status" value="1"/>
</dbReference>
<dbReference type="InterPro" id="IPR011006">
    <property type="entry name" value="CheY-like_superfamily"/>
</dbReference>
<dbReference type="InterPro" id="IPR016032">
    <property type="entry name" value="Sig_transdc_resp-reg_C-effctor"/>
</dbReference>
<dbReference type="InterPro" id="IPR001789">
    <property type="entry name" value="Sig_transdc_resp-reg_receiver"/>
</dbReference>
<dbReference type="InterPro" id="IPR000792">
    <property type="entry name" value="Tscrpt_reg_LuxR_C"/>
</dbReference>
<dbReference type="InterPro" id="IPR039420">
    <property type="entry name" value="WalR-like"/>
</dbReference>
<dbReference type="PANTHER" id="PTHR43214:SF37">
    <property type="entry name" value="TRANSCRIPTIONAL REGULATORY PROTEIN YDFI"/>
    <property type="match status" value="1"/>
</dbReference>
<dbReference type="PANTHER" id="PTHR43214">
    <property type="entry name" value="TWO-COMPONENT RESPONSE REGULATOR"/>
    <property type="match status" value="1"/>
</dbReference>
<dbReference type="Pfam" id="PF00196">
    <property type="entry name" value="GerE"/>
    <property type="match status" value="1"/>
</dbReference>
<dbReference type="Pfam" id="PF00072">
    <property type="entry name" value="Response_reg"/>
    <property type="match status" value="1"/>
</dbReference>
<dbReference type="PRINTS" id="PR00038">
    <property type="entry name" value="HTHLUXR"/>
</dbReference>
<dbReference type="SMART" id="SM00421">
    <property type="entry name" value="HTH_LUXR"/>
    <property type="match status" value="1"/>
</dbReference>
<dbReference type="SMART" id="SM00448">
    <property type="entry name" value="REC"/>
    <property type="match status" value="1"/>
</dbReference>
<dbReference type="SUPFAM" id="SSF46894">
    <property type="entry name" value="C-terminal effector domain of the bipartite response regulators"/>
    <property type="match status" value="1"/>
</dbReference>
<dbReference type="SUPFAM" id="SSF52172">
    <property type="entry name" value="CheY-like"/>
    <property type="match status" value="1"/>
</dbReference>
<dbReference type="PROSITE" id="PS00622">
    <property type="entry name" value="HTH_LUXR_1"/>
    <property type="match status" value="1"/>
</dbReference>
<dbReference type="PROSITE" id="PS50043">
    <property type="entry name" value="HTH_LUXR_2"/>
    <property type="match status" value="1"/>
</dbReference>
<dbReference type="PROSITE" id="PS50110">
    <property type="entry name" value="RESPONSE_REGULATORY"/>
    <property type="match status" value="1"/>
</dbReference>
<proteinExistence type="evidence at transcript level"/>
<accession>O32197</accession>
<accession>Q7B2J3</accession>
<sequence length="211" mass="23125">MIRVLLIDDHEMVRMGLAAFLEAQPDIEVIGEASDGSEGVRLAVELSPDVILMDLVMEGMDGIEATKQICRELSDPKIIVLTSFIDDDKVYPVIEAGALSYLLKTSKAAEIADAIRAASKGEPKLESKVAGKVLSRLRHSGENALPHESLTKRELEILCLIAEGKTNKEIGEELFITIKTVKTHITNILSKLDVSDRTQAAVYAHRNHLVN</sequence>
<feature type="chain" id="PRO_0000081114" description="Transcriptional regulatory protein LiaR">
    <location>
        <begin position="1"/>
        <end position="211"/>
    </location>
</feature>
<feature type="domain" description="Response regulatory" evidence="1">
    <location>
        <begin position="3"/>
        <end position="119"/>
    </location>
</feature>
<feature type="domain" description="HTH luxR-type" evidence="2">
    <location>
        <begin position="143"/>
        <end position="208"/>
    </location>
</feature>
<feature type="DNA-binding region" description="H-T-H motif" evidence="2">
    <location>
        <begin position="167"/>
        <end position="186"/>
    </location>
</feature>
<feature type="modified residue" description="4-aspartylphosphate" evidence="1">
    <location>
        <position position="54"/>
    </location>
</feature>
<keyword id="KW-0010">Activator</keyword>
<keyword id="KW-0963">Cytoplasm</keyword>
<keyword id="KW-0238">DNA-binding</keyword>
<keyword id="KW-0597">Phosphoprotein</keyword>
<keyword id="KW-1185">Reference proteome</keyword>
<keyword id="KW-0804">Transcription</keyword>
<keyword id="KW-0805">Transcription regulation</keyword>
<keyword id="KW-0902">Two-component regulatory system</keyword>
<evidence type="ECO:0000255" key="1">
    <source>
        <dbReference type="PROSITE-ProRule" id="PRU00169"/>
    </source>
</evidence>
<evidence type="ECO:0000255" key="2">
    <source>
        <dbReference type="PROSITE-ProRule" id="PRU00411"/>
    </source>
</evidence>
<evidence type="ECO:0000269" key="3">
    <source>
    </source>
</evidence>
<evidence type="ECO:0000269" key="4">
    <source>
    </source>
</evidence>
<evidence type="ECO:0000269" key="5">
    <source>
    </source>
</evidence>
<evidence type="ECO:0000269" key="6">
    <source>
    </source>
</evidence>
<evidence type="ECO:0000269" key="7">
    <source>
    </source>
</evidence>
<evidence type="ECO:0000305" key="8"/>
<gene>
    <name type="primary">liaR</name>
    <name type="synonym">yvqC</name>
    <name type="ordered locus">BSU33080</name>
</gene>